<dbReference type="EC" id="6.3.4.16" evidence="1"/>
<dbReference type="EC" id="6.3.5.5" evidence="1"/>
<dbReference type="EMBL" id="CP000423">
    <property type="protein sequence ID" value="ABJ70230.1"/>
    <property type="molecule type" value="Genomic_DNA"/>
</dbReference>
<dbReference type="RefSeq" id="WP_011674512.1">
    <property type="nucleotide sequence ID" value="NC_008526.1"/>
</dbReference>
<dbReference type="RefSeq" id="YP_806672.1">
    <property type="nucleotide sequence ID" value="NC_008526.1"/>
</dbReference>
<dbReference type="SMR" id="Q038Z2"/>
<dbReference type="STRING" id="321967.LSEI_1452"/>
<dbReference type="PaxDb" id="321967-LSEI_1452"/>
<dbReference type="KEGG" id="lca:LSEI_1452"/>
<dbReference type="PATRIC" id="fig|321967.11.peg.1432"/>
<dbReference type="HOGENOM" id="CLU_000513_1_2_9"/>
<dbReference type="UniPathway" id="UPA00068">
    <property type="reaction ID" value="UER00171"/>
</dbReference>
<dbReference type="UniPathway" id="UPA00070">
    <property type="reaction ID" value="UER00115"/>
</dbReference>
<dbReference type="Proteomes" id="UP000001651">
    <property type="component" value="Chromosome"/>
</dbReference>
<dbReference type="GO" id="GO:0005737">
    <property type="term" value="C:cytoplasm"/>
    <property type="evidence" value="ECO:0007669"/>
    <property type="project" value="TreeGrafter"/>
</dbReference>
<dbReference type="GO" id="GO:0005524">
    <property type="term" value="F:ATP binding"/>
    <property type="evidence" value="ECO:0007669"/>
    <property type="project" value="UniProtKB-UniRule"/>
</dbReference>
<dbReference type="GO" id="GO:0004087">
    <property type="term" value="F:carbamoyl-phosphate synthase (ammonia) activity"/>
    <property type="evidence" value="ECO:0007669"/>
    <property type="project" value="RHEA"/>
</dbReference>
<dbReference type="GO" id="GO:0004088">
    <property type="term" value="F:carbamoyl-phosphate synthase (glutamine-hydrolyzing) activity"/>
    <property type="evidence" value="ECO:0007669"/>
    <property type="project" value="UniProtKB-UniRule"/>
</dbReference>
<dbReference type="GO" id="GO:0046872">
    <property type="term" value="F:metal ion binding"/>
    <property type="evidence" value="ECO:0007669"/>
    <property type="project" value="UniProtKB-KW"/>
</dbReference>
<dbReference type="GO" id="GO:0044205">
    <property type="term" value="P:'de novo' UMP biosynthetic process"/>
    <property type="evidence" value="ECO:0007669"/>
    <property type="project" value="UniProtKB-UniRule"/>
</dbReference>
<dbReference type="GO" id="GO:0006541">
    <property type="term" value="P:glutamine metabolic process"/>
    <property type="evidence" value="ECO:0007669"/>
    <property type="project" value="TreeGrafter"/>
</dbReference>
<dbReference type="GO" id="GO:0006526">
    <property type="term" value="P:L-arginine biosynthetic process"/>
    <property type="evidence" value="ECO:0007669"/>
    <property type="project" value="UniProtKB-UniRule"/>
</dbReference>
<dbReference type="CDD" id="cd01424">
    <property type="entry name" value="MGS_CPS_II"/>
    <property type="match status" value="1"/>
</dbReference>
<dbReference type="FunFam" id="1.10.1030.10:FF:000002">
    <property type="entry name" value="Carbamoyl-phosphate synthase large chain"/>
    <property type="match status" value="1"/>
</dbReference>
<dbReference type="FunFam" id="3.30.1490.20:FF:000001">
    <property type="entry name" value="Carbamoyl-phosphate synthase large chain"/>
    <property type="match status" value="1"/>
</dbReference>
<dbReference type="FunFam" id="3.30.470.20:FF:000001">
    <property type="entry name" value="Carbamoyl-phosphate synthase large chain"/>
    <property type="match status" value="1"/>
</dbReference>
<dbReference type="FunFam" id="3.30.470.20:FF:000026">
    <property type="entry name" value="Carbamoyl-phosphate synthase large chain"/>
    <property type="match status" value="1"/>
</dbReference>
<dbReference type="FunFam" id="3.40.50.20:FF:000001">
    <property type="entry name" value="Carbamoyl-phosphate synthase large chain"/>
    <property type="match status" value="2"/>
</dbReference>
<dbReference type="Gene3D" id="3.40.50.20">
    <property type="match status" value="2"/>
</dbReference>
<dbReference type="Gene3D" id="3.30.1490.20">
    <property type="entry name" value="ATP-grasp fold, A domain"/>
    <property type="match status" value="1"/>
</dbReference>
<dbReference type="Gene3D" id="3.30.470.20">
    <property type="entry name" value="ATP-grasp fold, B domain"/>
    <property type="match status" value="2"/>
</dbReference>
<dbReference type="Gene3D" id="1.10.1030.10">
    <property type="entry name" value="Carbamoyl-phosphate synthetase, large subunit oligomerisation domain"/>
    <property type="match status" value="1"/>
</dbReference>
<dbReference type="Gene3D" id="3.40.50.1380">
    <property type="entry name" value="Methylglyoxal synthase-like domain"/>
    <property type="match status" value="1"/>
</dbReference>
<dbReference type="HAMAP" id="MF_01210_A">
    <property type="entry name" value="CPSase_L_chain_A"/>
    <property type="match status" value="1"/>
</dbReference>
<dbReference type="HAMAP" id="MF_01210_B">
    <property type="entry name" value="CPSase_L_chain_B"/>
    <property type="match status" value="1"/>
</dbReference>
<dbReference type="InterPro" id="IPR011761">
    <property type="entry name" value="ATP-grasp"/>
</dbReference>
<dbReference type="InterPro" id="IPR013815">
    <property type="entry name" value="ATP_grasp_subdomain_1"/>
</dbReference>
<dbReference type="InterPro" id="IPR006275">
    <property type="entry name" value="CarbamoylP_synth_lsu"/>
</dbReference>
<dbReference type="InterPro" id="IPR005480">
    <property type="entry name" value="CarbamoylP_synth_lsu_oligo"/>
</dbReference>
<dbReference type="InterPro" id="IPR036897">
    <property type="entry name" value="CarbamoylP_synth_lsu_oligo_sf"/>
</dbReference>
<dbReference type="InterPro" id="IPR005479">
    <property type="entry name" value="CbamoylP_synth_lsu-like_ATP-bd"/>
</dbReference>
<dbReference type="InterPro" id="IPR005483">
    <property type="entry name" value="CbamoylP_synth_lsu_CPSase_dom"/>
</dbReference>
<dbReference type="InterPro" id="IPR011607">
    <property type="entry name" value="MGS-like_dom"/>
</dbReference>
<dbReference type="InterPro" id="IPR036914">
    <property type="entry name" value="MGS-like_dom_sf"/>
</dbReference>
<dbReference type="InterPro" id="IPR033937">
    <property type="entry name" value="MGS_CPS_CarB"/>
</dbReference>
<dbReference type="InterPro" id="IPR016185">
    <property type="entry name" value="PreATP-grasp_dom_sf"/>
</dbReference>
<dbReference type="NCBIfam" id="TIGR01369">
    <property type="entry name" value="CPSaseII_lrg"/>
    <property type="match status" value="1"/>
</dbReference>
<dbReference type="NCBIfam" id="NF003671">
    <property type="entry name" value="PRK05294.1"/>
    <property type="match status" value="1"/>
</dbReference>
<dbReference type="NCBIfam" id="NF009455">
    <property type="entry name" value="PRK12815.1"/>
    <property type="match status" value="1"/>
</dbReference>
<dbReference type="PANTHER" id="PTHR11405:SF53">
    <property type="entry name" value="CARBAMOYL-PHOSPHATE SYNTHASE [AMMONIA], MITOCHONDRIAL"/>
    <property type="match status" value="1"/>
</dbReference>
<dbReference type="PANTHER" id="PTHR11405">
    <property type="entry name" value="CARBAMOYLTRANSFERASE FAMILY MEMBER"/>
    <property type="match status" value="1"/>
</dbReference>
<dbReference type="Pfam" id="PF02786">
    <property type="entry name" value="CPSase_L_D2"/>
    <property type="match status" value="2"/>
</dbReference>
<dbReference type="Pfam" id="PF02787">
    <property type="entry name" value="CPSase_L_D3"/>
    <property type="match status" value="1"/>
</dbReference>
<dbReference type="Pfam" id="PF02142">
    <property type="entry name" value="MGS"/>
    <property type="match status" value="1"/>
</dbReference>
<dbReference type="PRINTS" id="PR00098">
    <property type="entry name" value="CPSASE"/>
</dbReference>
<dbReference type="SMART" id="SM01096">
    <property type="entry name" value="CPSase_L_D3"/>
    <property type="match status" value="1"/>
</dbReference>
<dbReference type="SMART" id="SM01209">
    <property type="entry name" value="GARS_A"/>
    <property type="match status" value="1"/>
</dbReference>
<dbReference type="SMART" id="SM00851">
    <property type="entry name" value="MGS"/>
    <property type="match status" value="1"/>
</dbReference>
<dbReference type="SUPFAM" id="SSF48108">
    <property type="entry name" value="Carbamoyl phosphate synthetase, large subunit connection domain"/>
    <property type="match status" value="1"/>
</dbReference>
<dbReference type="SUPFAM" id="SSF56059">
    <property type="entry name" value="Glutathione synthetase ATP-binding domain-like"/>
    <property type="match status" value="2"/>
</dbReference>
<dbReference type="SUPFAM" id="SSF52335">
    <property type="entry name" value="Methylglyoxal synthase-like"/>
    <property type="match status" value="1"/>
</dbReference>
<dbReference type="SUPFAM" id="SSF52440">
    <property type="entry name" value="PreATP-grasp domain"/>
    <property type="match status" value="2"/>
</dbReference>
<dbReference type="PROSITE" id="PS50975">
    <property type="entry name" value="ATP_GRASP"/>
    <property type="match status" value="2"/>
</dbReference>
<dbReference type="PROSITE" id="PS00866">
    <property type="entry name" value="CPSASE_1"/>
    <property type="match status" value="2"/>
</dbReference>
<dbReference type="PROSITE" id="PS00867">
    <property type="entry name" value="CPSASE_2"/>
    <property type="match status" value="2"/>
</dbReference>
<dbReference type="PROSITE" id="PS51855">
    <property type="entry name" value="MGS"/>
    <property type="match status" value="1"/>
</dbReference>
<keyword id="KW-0028">Amino-acid biosynthesis</keyword>
<keyword id="KW-0055">Arginine biosynthesis</keyword>
<keyword id="KW-0067">ATP-binding</keyword>
<keyword id="KW-0436">Ligase</keyword>
<keyword id="KW-0460">Magnesium</keyword>
<keyword id="KW-0464">Manganese</keyword>
<keyword id="KW-0479">Metal-binding</keyword>
<keyword id="KW-0547">Nucleotide-binding</keyword>
<keyword id="KW-0665">Pyrimidine biosynthesis</keyword>
<keyword id="KW-1185">Reference proteome</keyword>
<keyword id="KW-0677">Repeat</keyword>
<reference key="1">
    <citation type="journal article" date="2006" name="Proc. Natl. Acad. Sci. U.S.A.">
        <title>Comparative genomics of the lactic acid bacteria.</title>
        <authorList>
            <person name="Makarova K.S."/>
            <person name="Slesarev A."/>
            <person name="Wolf Y.I."/>
            <person name="Sorokin A."/>
            <person name="Mirkin B."/>
            <person name="Koonin E.V."/>
            <person name="Pavlov A."/>
            <person name="Pavlova N."/>
            <person name="Karamychev V."/>
            <person name="Polouchine N."/>
            <person name="Shakhova V."/>
            <person name="Grigoriev I."/>
            <person name="Lou Y."/>
            <person name="Rohksar D."/>
            <person name="Lucas S."/>
            <person name="Huang K."/>
            <person name="Goodstein D.M."/>
            <person name="Hawkins T."/>
            <person name="Plengvidhya V."/>
            <person name="Welker D."/>
            <person name="Hughes J."/>
            <person name="Goh Y."/>
            <person name="Benson A."/>
            <person name="Baldwin K."/>
            <person name="Lee J.-H."/>
            <person name="Diaz-Muniz I."/>
            <person name="Dosti B."/>
            <person name="Smeianov V."/>
            <person name="Wechter W."/>
            <person name="Barabote R."/>
            <person name="Lorca G."/>
            <person name="Altermann E."/>
            <person name="Barrangou R."/>
            <person name="Ganesan B."/>
            <person name="Xie Y."/>
            <person name="Rawsthorne H."/>
            <person name="Tamir D."/>
            <person name="Parker C."/>
            <person name="Breidt F."/>
            <person name="Broadbent J.R."/>
            <person name="Hutkins R."/>
            <person name="O'Sullivan D."/>
            <person name="Steele J."/>
            <person name="Unlu G."/>
            <person name="Saier M.H. Jr."/>
            <person name="Klaenhammer T."/>
            <person name="Richardson P."/>
            <person name="Kozyavkin S."/>
            <person name="Weimer B.C."/>
            <person name="Mills D.A."/>
        </authorList>
    </citation>
    <scope>NUCLEOTIDE SEQUENCE [LARGE SCALE GENOMIC DNA]</scope>
    <source>
        <strain>ATCC 334 / BCRC 17002 / CCUG 31169 / CIP 107868 / KCTC 3260 / NRRL B-441</strain>
    </source>
</reference>
<sequence length="1060" mass="115971">MPKRQDIHKILVIGSGPIIIGQAAEFDYSGTQACLALREEGYEVVLVNSNPATIMTDTEIADRVYIEPLTVEFVSQILRKELPDAILPTIGGQIGLNLAMKLSNTGILDELGIELLGTKLTAIDQAEDRELFKNLMQKLHEPVPESAIANNIEEAQQFADKIGFPVIIRPAFTMGGTGGGIANNEKELAEIAENGLNLSPVTQVLVERSIAGYKEVEFEVMRDAADSAIVVCNMENFDPVGVHTGDSMVFAPTQTLTDKEVQMLRDAALKIIRALKIEGGCNVQFALDRNSFKYYVIEVNPRVSRSSALASKATGYPIAKMAAKIAVGLHLDEIKNPVTKKTWAEFEPALDYVVTKLPRFPFDKFENGDRTLGTQMKATGEVMAIGRTLEESLLKAVRSLEVGLIHPERPAFAKLSDDELSKQIIQANDERLFYLAEAFRRDYTIEEVAELSKMNPFFLDKIKHIVELERELAAHKADLGLLAEVKRYGFADEEIAKLWGLHADQVRQMRKEQKILPVYKMVDTCAGEFASDTPYYYSTYESSTESVKSDKPSVLVIGSGPIRIGQGVEFDYATVHSVKAIQKAGYEAIIMNSNPETVSTDFSIADKLYFEPLTLEDVLNVIDLEQPEGVIVQFGGQTAINLAEPLANRGIKILGTSVEDLNRAEDRDLFDQVIKSLKLPQPEGGTATDKAGALAVADKIGYPVLVRPSYVLGGRAMEIVHDATELDNYIDRAVSVSHDHPVLIDHYLVGKECEVDCISDGDTVVLPGIMEHIERAGIHSGDSMAVYPPQTFSQDIIDQITDATIKLSRTLNCIGLMNVQFIIHAGKAYVIEVNPRASRTVPFLSKVTNIKLAQVATLAILGLSLKEQGFETGLLPNQSGIHVKSPVFSFSKLNHVDSLLGPEMKSTGEVMGSDTTLAKALYKAFEAAGMHLPQFGRALITVKDADKAEATALAKRFREVGYQLVATSGTAKAFEKTGITVSTIEKLDSGQETILEDIANRKIQLVINTMSADKKVSSDGFRIREAAIEHGVPLMTSLDTAGAILKVLELQAFSISPIKS</sequence>
<accession>Q038Z2</accession>
<organism>
    <name type="scientific">Lacticaseibacillus paracasei (strain ATCC 334 / BCRC 17002 / CCUG 31169 / CIP 107868 / KCTC 3260 / NRRL B-441)</name>
    <name type="common">Lactobacillus paracasei</name>
    <dbReference type="NCBI Taxonomy" id="321967"/>
    <lineage>
        <taxon>Bacteria</taxon>
        <taxon>Bacillati</taxon>
        <taxon>Bacillota</taxon>
        <taxon>Bacilli</taxon>
        <taxon>Lactobacillales</taxon>
        <taxon>Lactobacillaceae</taxon>
        <taxon>Lacticaseibacillus</taxon>
    </lineage>
</organism>
<evidence type="ECO:0000255" key="1">
    <source>
        <dbReference type="HAMAP-Rule" id="MF_01210"/>
    </source>
</evidence>
<name>CARB_LACP3</name>
<proteinExistence type="inferred from homology"/>
<comment type="function">
    <text evidence="1">Large subunit of the glutamine-dependent carbamoyl phosphate synthetase (CPSase). CPSase catalyzes the formation of carbamoyl phosphate from the ammonia moiety of glutamine, carbonate, and phosphate donated by ATP, constituting the first step of 2 biosynthetic pathways, one leading to arginine and/or urea and the other to pyrimidine nucleotides. The large subunit (synthetase) binds the substrates ammonia (free or transferred from glutamine from the small subunit), hydrogencarbonate and ATP and carries out an ATP-coupled ligase reaction, activating hydrogencarbonate by forming carboxy phosphate which reacts with ammonia to form carbamoyl phosphate.</text>
</comment>
<comment type="catalytic activity">
    <reaction evidence="1">
        <text>hydrogencarbonate + L-glutamine + 2 ATP + H2O = carbamoyl phosphate + L-glutamate + 2 ADP + phosphate + 2 H(+)</text>
        <dbReference type="Rhea" id="RHEA:18633"/>
        <dbReference type="ChEBI" id="CHEBI:15377"/>
        <dbReference type="ChEBI" id="CHEBI:15378"/>
        <dbReference type="ChEBI" id="CHEBI:17544"/>
        <dbReference type="ChEBI" id="CHEBI:29985"/>
        <dbReference type="ChEBI" id="CHEBI:30616"/>
        <dbReference type="ChEBI" id="CHEBI:43474"/>
        <dbReference type="ChEBI" id="CHEBI:58228"/>
        <dbReference type="ChEBI" id="CHEBI:58359"/>
        <dbReference type="ChEBI" id="CHEBI:456216"/>
        <dbReference type="EC" id="6.3.5.5"/>
    </reaction>
</comment>
<comment type="catalytic activity">
    <molecule>Carbamoyl phosphate synthase large chain</molecule>
    <reaction evidence="1">
        <text>hydrogencarbonate + NH4(+) + 2 ATP = carbamoyl phosphate + 2 ADP + phosphate + 2 H(+)</text>
        <dbReference type="Rhea" id="RHEA:18029"/>
        <dbReference type="ChEBI" id="CHEBI:15378"/>
        <dbReference type="ChEBI" id="CHEBI:17544"/>
        <dbReference type="ChEBI" id="CHEBI:28938"/>
        <dbReference type="ChEBI" id="CHEBI:30616"/>
        <dbReference type="ChEBI" id="CHEBI:43474"/>
        <dbReference type="ChEBI" id="CHEBI:58228"/>
        <dbReference type="ChEBI" id="CHEBI:456216"/>
        <dbReference type="EC" id="6.3.4.16"/>
    </reaction>
</comment>
<comment type="cofactor">
    <cofactor evidence="1">
        <name>Mg(2+)</name>
        <dbReference type="ChEBI" id="CHEBI:18420"/>
    </cofactor>
    <cofactor evidence="1">
        <name>Mn(2+)</name>
        <dbReference type="ChEBI" id="CHEBI:29035"/>
    </cofactor>
    <text evidence="1">Binds 4 Mg(2+) or Mn(2+) ions per subunit.</text>
</comment>
<comment type="pathway">
    <text evidence="1">Amino-acid biosynthesis; L-arginine biosynthesis; carbamoyl phosphate from bicarbonate: step 1/1.</text>
</comment>
<comment type="pathway">
    <text evidence="1">Pyrimidine metabolism; UMP biosynthesis via de novo pathway; (S)-dihydroorotate from bicarbonate: step 1/3.</text>
</comment>
<comment type="subunit">
    <text evidence="1">Composed of two chains; the small (or glutamine) chain promotes the hydrolysis of glutamine to ammonia, which is used by the large (or ammonia) chain to synthesize carbamoyl phosphate. Tetramer of heterodimers (alpha,beta)4.</text>
</comment>
<comment type="domain">
    <text evidence="1">The large subunit is composed of 2 ATP-grasp domains that are involved in binding the 2 ATP molecules needed for carbamoyl phosphate synthesis. The N-terminal ATP-grasp domain (referred to as the carboxyphosphate synthetic component) catalyzes the ATP-dependent phosphorylation of hydrogencarbonate to carboxyphosphate and the subsequent nucleophilic attack by ammonia to form a carbamate intermediate. The C-terminal ATP-grasp domain (referred to as the carbamoyl phosphate synthetic component) then catalyzes the phosphorylation of carbamate with the second ATP to form the end product carbamoyl phosphate. The reactive and unstable enzyme intermediates are sequentially channeled from one active site to the next through the interior of the protein over a distance of at least 96 A.</text>
</comment>
<comment type="similarity">
    <text evidence="1">Belongs to the CarB family.</text>
</comment>
<gene>
    <name evidence="1" type="primary">carB</name>
    <name type="ordered locus">LSEI_1452</name>
</gene>
<protein>
    <recommendedName>
        <fullName evidence="1">Carbamoyl phosphate synthase large chain</fullName>
        <ecNumber evidence="1">6.3.4.16</ecNumber>
        <ecNumber evidence="1">6.3.5.5</ecNumber>
    </recommendedName>
    <alternativeName>
        <fullName evidence="1">Carbamoyl phosphate synthetase ammonia chain</fullName>
    </alternativeName>
</protein>
<feature type="chain" id="PRO_1000066353" description="Carbamoyl phosphate synthase large chain">
    <location>
        <begin position="1"/>
        <end position="1060"/>
    </location>
</feature>
<feature type="domain" description="ATP-grasp 1" evidence="1">
    <location>
        <begin position="133"/>
        <end position="327"/>
    </location>
</feature>
<feature type="domain" description="ATP-grasp 2" evidence="1">
    <location>
        <begin position="671"/>
        <end position="861"/>
    </location>
</feature>
<feature type="domain" description="MGS-like" evidence="1">
    <location>
        <begin position="930"/>
        <end position="1060"/>
    </location>
</feature>
<feature type="region of interest" description="Carboxyphosphate synthetic domain" evidence="1">
    <location>
        <begin position="1"/>
        <end position="401"/>
    </location>
</feature>
<feature type="region of interest" description="Oligomerization domain" evidence="1">
    <location>
        <begin position="402"/>
        <end position="546"/>
    </location>
</feature>
<feature type="region of interest" description="Carbamoyl phosphate synthetic domain" evidence="1">
    <location>
        <begin position="547"/>
        <end position="929"/>
    </location>
</feature>
<feature type="region of interest" description="Allosteric domain" evidence="1">
    <location>
        <begin position="930"/>
        <end position="1060"/>
    </location>
</feature>
<feature type="binding site" evidence="1">
    <location>
        <position position="129"/>
    </location>
    <ligand>
        <name>ATP</name>
        <dbReference type="ChEBI" id="CHEBI:30616"/>
        <label>1</label>
    </ligand>
</feature>
<feature type="binding site" evidence="1">
    <location>
        <position position="169"/>
    </location>
    <ligand>
        <name>ATP</name>
        <dbReference type="ChEBI" id="CHEBI:30616"/>
        <label>1</label>
    </ligand>
</feature>
<feature type="binding site" evidence="1">
    <location>
        <position position="175"/>
    </location>
    <ligand>
        <name>ATP</name>
        <dbReference type="ChEBI" id="CHEBI:30616"/>
        <label>1</label>
    </ligand>
</feature>
<feature type="binding site" evidence="1">
    <location>
        <position position="176"/>
    </location>
    <ligand>
        <name>ATP</name>
        <dbReference type="ChEBI" id="CHEBI:30616"/>
        <label>1</label>
    </ligand>
</feature>
<feature type="binding site" evidence="1">
    <location>
        <position position="208"/>
    </location>
    <ligand>
        <name>ATP</name>
        <dbReference type="ChEBI" id="CHEBI:30616"/>
        <label>1</label>
    </ligand>
</feature>
<feature type="binding site" evidence="1">
    <location>
        <position position="210"/>
    </location>
    <ligand>
        <name>ATP</name>
        <dbReference type="ChEBI" id="CHEBI:30616"/>
        <label>1</label>
    </ligand>
</feature>
<feature type="binding site" evidence="1">
    <location>
        <position position="215"/>
    </location>
    <ligand>
        <name>ATP</name>
        <dbReference type="ChEBI" id="CHEBI:30616"/>
        <label>1</label>
    </ligand>
</feature>
<feature type="binding site" evidence="1">
    <location>
        <position position="241"/>
    </location>
    <ligand>
        <name>ATP</name>
        <dbReference type="ChEBI" id="CHEBI:30616"/>
        <label>1</label>
    </ligand>
</feature>
<feature type="binding site" evidence="1">
    <location>
        <position position="242"/>
    </location>
    <ligand>
        <name>ATP</name>
        <dbReference type="ChEBI" id="CHEBI:30616"/>
        <label>1</label>
    </ligand>
</feature>
<feature type="binding site" evidence="1">
    <location>
        <position position="243"/>
    </location>
    <ligand>
        <name>ATP</name>
        <dbReference type="ChEBI" id="CHEBI:30616"/>
        <label>1</label>
    </ligand>
</feature>
<feature type="binding site" evidence="1">
    <location>
        <position position="284"/>
    </location>
    <ligand>
        <name>ATP</name>
        <dbReference type="ChEBI" id="CHEBI:30616"/>
        <label>1</label>
    </ligand>
</feature>
<feature type="binding site" evidence="1">
    <location>
        <position position="284"/>
    </location>
    <ligand>
        <name>Mg(2+)</name>
        <dbReference type="ChEBI" id="CHEBI:18420"/>
        <label>1</label>
    </ligand>
</feature>
<feature type="binding site" evidence="1">
    <location>
        <position position="284"/>
    </location>
    <ligand>
        <name>Mn(2+)</name>
        <dbReference type="ChEBI" id="CHEBI:29035"/>
        <label>1</label>
    </ligand>
</feature>
<feature type="binding site" evidence="1">
    <location>
        <position position="298"/>
    </location>
    <ligand>
        <name>ATP</name>
        <dbReference type="ChEBI" id="CHEBI:30616"/>
        <label>1</label>
    </ligand>
</feature>
<feature type="binding site" evidence="1">
    <location>
        <position position="298"/>
    </location>
    <ligand>
        <name>Mg(2+)</name>
        <dbReference type="ChEBI" id="CHEBI:18420"/>
        <label>1</label>
    </ligand>
</feature>
<feature type="binding site" evidence="1">
    <location>
        <position position="298"/>
    </location>
    <ligand>
        <name>Mg(2+)</name>
        <dbReference type="ChEBI" id="CHEBI:18420"/>
        <label>2</label>
    </ligand>
</feature>
<feature type="binding site" evidence="1">
    <location>
        <position position="298"/>
    </location>
    <ligand>
        <name>Mn(2+)</name>
        <dbReference type="ChEBI" id="CHEBI:29035"/>
        <label>1</label>
    </ligand>
</feature>
<feature type="binding site" evidence="1">
    <location>
        <position position="298"/>
    </location>
    <ligand>
        <name>Mn(2+)</name>
        <dbReference type="ChEBI" id="CHEBI:29035"/>
        <label>2</label>
    </ligand>
</feature>
<feature type="binding site" evidence="1">
    <location>
        <position position="300"/>
    </location>
    <ligand>
        <name>Mg(2+)</name>
        <dbReference type="ChEBI" id="CHEBI:18420"/>
        <label>2</label>
    </ligand>
</feature>
<feature type="binding site" evidence="1">
    <location>
        <position position="300"/>
    </location>
    <ligand>
        <name>Mn(2+)</name>
        <dbReference type="ChEBI" id="CHEBI:29035"/>
        <label>2</label>
    </ligand>
</feature>
<feature type="binding site" evidence="1">
    <location>
        <position position="707"/>
    </location>
    <ligand>
        <name>ATP</name>
        <dbReference type="ChEBI" id="CHEBI:30616"/>
        <label>2</label>
    </ligand>
</feature>
<feature type="binding site" evidence="1">
    <location>
        <position position="746"/>
    </location>
    <ligand>
        <name>ATP</name>
        <dbReference type="ChEBI" id="CHEBI:30616"/>
        <label>2</label>
    </ligand>
</feature>
<feature type="binding site" evidence="1">
    <location>
        <position position="748"/>
    </location>
    <ligand>
        <name>ATP</name>
        <dbReference type="ChEBI" id="CHEBI:30616"/>
        <label>2</label>
    </ligand>
</feature>
<feature type="binding site" evidence="1">
    <location>
        <position position="752"/>
    </location>
    <ligand>
        <name>ATP</name>
        <dbReference type="ChEBI" id="CHEBI:30616"/>
        <label>2</label>
    </ligand>
</feature>
<feature type="binding site" evidence="1">
    <location>
        <position position="777"/>
    </location>
    <ligand>
        <name>ATP</name>
        <dbReference type="ChEBI" id="CHEBI:30616"/>
        <label>2</label>
    </ligand>
</feature>
<feature type="binding site" evidence="1">
    <location>
        <position position="778"/>
    </location>
    <ligand>
        <name>ATP</name>
        <dbReference type="ChEBI" id="CHEBI:30616"/>
        <label>2</label>
    </ligand>
</feature>
<feature type="binding site" evidence="1">
    <location>
        <position position="779"/>
    </location>
    <ligand>
        <name>ATP</name>
        <dbReference type="ChEBI" id="CHEBI:30616"/>
        <label>2</label>
    </ligand>
</feature>
<feature type="binding site" evidence="1">
    <location>
        <position position="780"/>
    </location>
    <ligand>
        <name>ATP</name>
        <dbReference type="ChEBI" id="CHEBI:30616"/>
        <label>2</label>
    </ligand>
</feature>
<feature type="binding site" evidence="1">
    <location>
        <position position="820"/>
    </location>
    <ligand>
        <name>ATP</name>
        <dbReference type="ChEBI" id="CHEBI:30616"/>
        <label>2</label>
    </ligand>
</feature>
<feature type="binding site" evidence="1">
    <location>
        <position position="820"/>
    </location>
    <ligand>
        <name>Mg(2+)</name>
        <dbReference type="ChEBI" id="CHEBI:18420"/>
        <label>3</label>
    </ligand>
</feature>
<feature type="binding site" evidence="1">
    <location>
        <position position="820"/>
    </location>
    <ligand>
        <name>Mn(2+)</name>
        <dbReference type="ChEBI" id="CHEBI:29035"/>
        <label>3</label>
    </ligand>
</feature>
<feature type="binding site" evidence="1">
    <location>
        <position position="832"/>
    </location>
    <ligand>
        <name>ATP</name>
        <dbReference type="ChEBI" id="CHEBI:30616"/>
        <label>2</label>
    </ligand>
</feature>
<feature type="binding site" evidence="1">
    <location>
        <position position="832"/>
    </location>
    <ligand>
        <name>Mg(2+)</name>
        <dbReference type="ChEBI" id="CHEBI:18420"/>
        <label>3</label>
    </ligand>
</feature>
<feature type="binding site" evidence="1">
    <location>
        <position position="832"/>
    </location>
    <ligand>
        <name>Mg(2+)</name>
        <dbReference type="ChEBI" id="CHEBI:18420"/>
        <label>4</label>
    </ligand>
</feature>
<feature type="binding site" evidence="1">
    <location>
        <position position="832"/>
    </location>
    <ligand>
        <name>Mn(2+)</name>
        <dbReference type="ChEBI" id="CHEBI:29035"/>
        <label>3</label>
    </ligand>
</feature>
<feature type="binding site" evidence="1">
    <location>
        <position position="832"/>
    </location>
    <ligand>
        <name>Mn(2+)</name>
        <dbReference type="ChEBI" id="CHEBI:29035"/>
        <label>4</label>
    </ligand>
</feature>
<feature type="binding site" evidence="1">
    <location>
        <position position="834"/>
    </location>
    <ligand>
        <name>Mg(2+)</name>
        <dbReference type="ChEBI" id="CHEBI:18420"/>
        <label>4</label>
    </ligand>
</feature>
<feature type="binding site" evidence="1">
    <location>
        <position position="834"/>
    </location>
    <ligand>
        <name>Mn(2+)</name>
        <dbReference type="ChEBI" id="CHEBI:29035"/>
        <label>4</label>
    </ligand>
</feature>